<gene>
    <name evidence="1" type="primary">clpP2</name>
    <name type="ordered locus">ABC3026</name>
</gene>
<accession>Q5WDK0</accession>
<protein>
    <recommendedName>
        <fullName evidence="1">ATP-dependent Clp protease proteolytic subunit 2</fullName>
        <ecNumber evidence="1">3.4.21.92</ecNumber>
    </recommendedName>
    <alternativeName>
        <fullName evidence="1">Endopeptidase Clp 2</fullName>
    </alternativeName>
</protein>
<dbReference type="EC" id="3.4.21.92" evidence="1"/>
<dbReference type="EMBL" id="AP006627">
    <property type="protein sequence ID" value="BAD65560.1"/>
    <property type="molecule type" value="Genomic_DNA"/>
</dbReference>
<dbReference type="SMR" id="Q5WDK0"/>
<dbReference type="STRING" id="66692.ABC3026"/>
<dbReference type="MEROPS" id="S14.001"/>
<dbReference type="KEGG" id="bcl:ABC3026"/>
<dbReference type="eggNOG" id="COG0740">
    <property type="taxonomic scope" value="Bacteria"/>
</dbReference>
<dbReference type="HOGENOM" id="CLU_058707_3_2_9"/>
<dbReference type="OrthoDB" id="9802800at2"/>
<dbReference type="Proteomes" id="UP000001168">
    <property type="component" value="Chromosome"/>
</dbReference>
<dbReference type="GO" id="GO:0005737">
    <property type="term" value="C:cytoplasm"/>
    <property type="evidence" value="ECO:0007669"/>
    <property type="project" value="UniProtKB-SubCell"/>
</dbReference>
<dbReference type="GO" id="GO:0009368">
    <property type="term" value="C:endopeptidase Clp complex"/>
    <property type="evidence" value="ECO:0007669"/>
    <property type="project" value="TreeGrafter"/>
</dbReference>
<dbReference type="GO" id="GO:0004176">
    <property type="term" value="F:ATP-dependent peptidase activity"/>
    <property type="evidence" value="ECO:0007669"/>
    <property type="project" value="InterPro"/>
</dbReference>
<dbReference type="GO" id="GO:0051117">
    <property type="term" value="F:ATPase binding"/>
    <property type="evidence" value="ECO:0007669"/>
    <property type="project" value="TreeGrafter"/>
</dbReference>
<dbReference type="GO" id="GO:0004252">
    <property type="term" value="F:serine-type endopeptidase activity"/>
    <property type="evidence" value="ECO:0007669"/>
    <property type="project" value="UniProtKB-UniRule"/>
</dbReference>
<dbReference type="GO" id="GO:0006515">
    <property type="term" value="P:protein quality control for misfolded or incompletely synthesized proteins"/>
    <property type="evidence" value="ECO:0007669"/>
    <property type="project" value="TreeGrafter"/>
</dbReference>
<dbReference type="CDD" id="cd07017">
    <property type="entry name" value="S14_ClpP_2"/>
    <property type="match status" value="1"/>
</dbReference>
<dbReference type="FunFam" id="3.90.226.10:FF:000001">
    <property type="entry name" value="ATP-dependent Clp protease proteolytic subunit"/>
    <property type="match status" value="1"/>
</dbReference>
<dbReference type="Gene3D" id="3.90.226.10">
    <property type="entry name" value="2-enoyl-CoA Hydratase, Chain A, domain 1"/>
    <property type="match status" value="1"/>
</dbReference>
<dbReference type="HAMAP" id="MF_00444">
    <property type="entry name" value="ClpP"/>
    <property type="match status" value="1"/>
</dbReference>
<dbReference type="InterPro" id="IPR001907">
    <property type="entry name" value="ClpP"/>
</dbReference>
<dbReference type="InterPro" id="IPR029045">
    <property type="entry name" value="ClpP/crotonase-like_dom_sf"/>
</dbReference>
<dbReference type="InterPro" id="IPR023562">
    <property type="entry name" value="ClpP/TepA"/>
</dbReference>
<dbReference type="InterPro" id="IPR033135">
    <property type="entry name" value="ClpP_His_AS"/>
</dbReference>
<dbReference type="InterPro" id="IPR018215">
    <property type="entry name" value="ClpP_Ser_AS"/>
</dbReference>
<dbReference type="NCBIfam" id="TIGR00493">
    <property type="entry name" value="clpP"/>
    <property type="match status" value="1"/>
</dbReference>
<dbReference type="NCBIfam" id="NF001368">
    <property type="entry name" value="PRK00277.1"/>
    <property type="match status" value="1"/>
</dbReference>
<dbReference type="NCBIfam" id="NF009205">
    <property type="entry name" value="PRK12553.1"/>
    <property type="match status" value="1"/>
</dbReference>
<dbReference type="PANTHER" id="PTHR10381">
    <property type="entry name" value="ATP-DEPENDENT CLP PROTEASE PROTEOLYTIC SUBUNIT"/>
    <property type="match status" value="1"/>
</dbReference>
<dbReference type="PANTHER" id="PTHR10381:SF70">
    <property type="entry name" value="ATP-DEPENDENT CLP PROTEASE PROTEOLYTIC SUBUNIT"/>
    <property type="match status" value="1"/>
</dbReference>
<dbReference type="Pfam" id="PF00574">
    <property type="entry name" value="CLP_protease"/>
    <property type="match status" value="1"/>
</dbReference>
<dbReference type="PRINTS" id="PR00127">
    <property type="entry name" value="CLPPROTEASEP"/>
</dbReference>
<dbReference type="SUPFAM" id="SSF52096">
    <property type="entry name" value="ClpP/crotonase"/>
    <property type="match status" value="1"/>
</dbReference>
<dbReference type="PROSITE" id="PS00382">
    <property type="entry name" value="CLP_PROTEASE_HIS"/>
    <property type="match status" value="1"/>
</dbReference>
<dbReference type="PROSITE" id="PS00381">
    <property type="entry name" value="CLP_PROTEASE_SER"/>
    <property type="match status" value="1"/>
</dbReference>
<feature type="chain" id="PRO_0000179500" description="ATP-dependent Clp protease proteolytic subunit 2">
    <location>
        <begin position="1"/>
        <end position="195"/>
    </location>
</feature>
<feature type="active site" description="Nucleophile" evidence="1">
    <location>
        <position position="98"/>
    </location>
</feature>
<feature type="active site" evidence="1">
    <location>
        <position position="123"/>
    </location>
</feature>
<sequence length="195" mass="21602">MNLIPTVIEQTNRGERAYDIYSRLLKDRIIMLGSGVDDNVANSIVAQMLFLQAEDPEKDISLYINSPGGSITAGMAIYDTMQFIKPDVSTICIGMAASMGAFLLTAGAKGKRMALPNSEVMIHQPLGGMQGQAADMEIHARRIIQMREKLNQIMAERSGQPYERIARDTDRDNFMTAEQAKEYGLIDKVIETPTK</sequence>
<evidence type="ECO:0000255" key="1">
    <source>
        <dbReference type="HAMAP-Rule" id="MF_00444"/>
    </source>
</evidence>
<proteinExistence type="inferred from homology"/>
<keyword id="KW-0963">Cytoplasm</keyword>
<keyword id="KW-0378">Hydrolase</keyword>
<keyword id="KW-0645">Protease</keyword>
<keyword id="KW-1185">Reference proteome</keyword>
<keyword id="KW-0720">Serine protease</keyword>
<organism>
    <name type="scientific">Shouchella clausii (strain KSM-K16)</name>
    <name type="common">Alkalihalobacillus clausii</name>
    <dbReference type="NCBI Taxonomy" id="66692"/>
    <lineage>
        <taxon>Bacteria</taxon>
        <taxon>Bacillati</taxon>
        <taxon>Bacillota</taxon>
        <taxon>Bacilli</taxon>
        <taxon>Bacillales</taxon>
        <taxon>Bacillaceae</taxon>
        <taxon>Shouchella</taxon>
    </lineage>
</organism>
<name>CLPP2_SHOC1</name>
<reference key="1">
    <citation type="submission" date="2003-10" db="EMBL/GenBank/DDBJ databases">
        <title>The complete genome sequence of the alkaliphilic Bacillus clausii KSM-K16.</title>
        <authorList>
            <person name="Takaki Y."/>
            <person name="Kageyama Y."/>
            <person name="Shimamura S."/>
            <person name="Suzuki H."/>
            <person name="Nishi S."/>
            <person name="Hatada Y."/>
            <person name="Kawai S."/>
            <person name="Ito S."/>
            <person name="Horikoshi K."/>
        </authorList>
    </citation>
    <scope>NUCLEOTIDE SEQUENCE [LARGE SCALE GENOMIC DNA]</scope>
    <source>
        <strain>KSM-K16</strain>
    </source>
</reference>
<comment type="function">
    <text evidence="1">Cleaves peptides in various proteins in a process that requires ATP hydrolysis. Has a chymotrypsin-like activity. Plays a major role in the degradation of misfolded proteins. ClpXP2 is involved in the complete degradation of the Site-2 clipped anti-sigma-W factor RsiW. This results in the release of SigW and the transcription activation of the genes under the control of the sigma-W factor (By similarity).</text>
</comment>
<comment type="catalytic activity">
    <reaction evidence="1">
        <text>Hydrolysis of proteins to small peptides in the presence of ATP and magnesium. alpha-casein is the usual test substrate. In the absence of ATP, only oligopeptides shorter than five residues are hydrolyzed (such as succinyl-Leu-Tyr-|-NHMec, and Leu-Tyr-Leu-|-Tyr-Trp, in which cleavage of the -Tyr-|-Leu- and -Tyr-|-Trp bonds also occurs).</text>
        <dbReference type="EC" id="3.4.21.92"/>
    </reaction>
</comment>
<comment type="subunit">
    <text evidence="1">Fourteen ClpP subunits assemble into 2 heptameric rings which stack back to back to give a disk-like structure with a central cavity, resembling the structure of eukaryotic proteasomes.</text>
</comment>
<comment type="subcellular location">
    <subcellularLocation>
        <location evidence="1">Cytoplasm</location>
    </subcellularLocation>
</comment>
<comment type="similarity">
    <text evidence="1">Belongs to the peptidase S14 family.</text>
</comment>